<proteinExistence type="evidence at protein level"/>
<keyword id="KW-0025">Alternative splicing</keyword>
<keyword id="KW-0963">Cytoplasm</keyword>
<keyword id="KW-0507">mRNA processing</keyword>
<keyword id="KW-1185">Reference proteome</keyword>
<keyword id="KW-0678">Repressor</keyword>
<keyword id="KW-0810">Translation regulation</keyword>
<comment type="function">
    <text evidence="4">As a component of the decapping complex, involved in the degradation of mRNAs. Promotes P-body formation. Translational repressor.</text>
</comment>
<comment type="subunit">
    <text evidence="4">Homodimer. Component of the decapping complex. Interacts with DCP1 and DCP2.</text>
</comment>
<comment type="interaction">
    <interactant intactId="EBI-4440994">
        <id>Q9C658</id>
    </interactant>
    <interactant intactId="EBI-7786643">
        <id>Q9SJF3</id>
        <label>At1g08370</label>
    </interactant>
    <organismsDiffer>false</organismsDiffer>
    <experiments>2</experiments>
</comment>
<comment type="subcellular location">
    <subcellularLocation>
        <location evidence="4">Cytoplasm</location>
        <location evidence="4">P-body</location>
    </subcellularLocation>
</comment>
<comment type="alternative products">
    <event type="alternative splicing"/>
    <isoform>
        <id>Q9C658-1</id>
        <name>1</name>
        <sequence type="displayed"/>
    </isoform>
    <isoform>
        <id>Q9C658-2</id>
        <name>2</name>
        <sequence type="described" ref="VSP_044028"/>
    </isoform>
</comment>
<comment type="developmental stage">
    <text evidence="4">Gradually accumulates during seed maturation and reaches maximum levels in dry seeds. Fades progressively upon germination.</text>
</comment>
<comment type="disruption phenotype">
    <text evidence="4">Seedlings with pale and weak cotyledons, characterized by disorganized veins. Impaired mRNA decapping and reduced P-bodies size. Altered transient seed storage proteins (SSPs) translational repression and degradation during seed germination.</text>
</comment>
<comment type="similarity">
    <text evidence="5">Belongs to the LSM14 family.</text>
</comment>
<comment type="sequence caution" evidence="5">
    <conflict type="erroneous gene model prediction">
        <sequence resource="EMBL-CDS" id="AAG50526"/>
    </conflict>
</comment>
<feature type="chain" id="PRO_0000418339" description="Protein decapping 5">
    <location>
        <begin position="1"/>
        <end position="611"/>
    </location>
</feature>
<feature type="domain" description="Sm" evidence="2">
    <location>
        <begin position="9"/>
        <end position="92"/>
    </location>
</feature>
<feature type="domain" description="DFDF" evidence="1">
    <location>
        <begin position="453"/>
        <end position="489"/>
    </location>
</feature>
<feature type="region of interest" description="Disordered" evidence="3">
    <location>
        <begin position="111"/>
        <end position="153"/>
    </location>
</feature>
<feature type="region of interest" description="Disordered" evidence="3">
    <location>
        <begin position="183"/>
        <end position="238"/>
    </location>
</feature>
<feature type="region of interest" description="Disordered" evidence="3">
    <location>
        <begin position="264"/>
        <end position="301"/>
    </location>
</feature>
<feature type="region of interest" description="Disordered" evidence="3">
    <location>
        <begin position="318"/>
        <end position="362"/>
    </location>
</feature>
<feature type="region of interest" description="Disordered" evidence="3">
    <location>
        <begin position="396"/>
        <end position="455"/>
    </location>
</feature>
<feature type="region of interest" description="Disordered" evidence="3">
    <location>
        <begin position="519"/>
        <end position="611"/>
    </location>
</feature>
<feature type="short sequence motif" description="FFD box">
    <location>
        <begin position="512"/>
        <end position="527"/>
    </location>
</feature>
<feature type="short sequence motif" description="TFG box">
    <location>
        <begin position="534"/>
        <end position="554"/>
    </location>
</feature>
<feature type="compositionally biased region" description="Polar residues" evidence="3">
    <location>
        <begin position="117"/>
        <end position="140"/>
    </location>
</feature>
<feature type="compositionally biased region" description="Polar residues" evidence="3">
    <location>
        <begin position="203"/>
        <end position="214"/>
    </location>
</feature>
<feature type="compositionally biased region" description="Low complexity" evidence="3">
    <location>
        <begin position="264"/>
        <end position="281"/>
    </location>
</feature>
<feature type="compositionally biased region" description="Polar residues" evidence="3">
    <location>
        <begin position="318"/>
        <end position="330"/>
    </location>
</feature>
<feature type="compositionally biased region" description="Polar residues" evidence="3">
    <location>
        <begin position="396"/>
        <end position="413"/>
    </location>
</feature>
<feature type="compositionally biased region" description="Polar residues" evidence="3">
    <location>
        <begin position="424"/>
        <end position="437"/>
    </location>
</feature>
<feature type="compositionally biased region" description="Basic residues" evidence="3">
    <location>
        <begin position="441"/>
        <end position="453"/>
    </location>
</feature>
<feature type="compositionally biased region" description="Basic and acidic residues" evidence="3">
    <location>
        <begin position="528"/>
        <end position="547"/>
    </location>
</feature>
<feature type="compositionally biased region" description="Gly residues" evidence="3">
    <location>
        <begin position="559"/>
        <end position="604"/>
    </location>
</feature>
<feature type="splice variant" id="VSP_044028" description="In isoform 2." evidence="5">
    <original>KPNGHSFPNHNGYR</original>
    <variation>KMHENLSG</variation>
    <location>
        <begin position="429"/>
        <end position="442"/>
    </location>
</feature>
<feature type="sequence conflict" description="In Ref. 3; AAK32845/AAL77748." evidence="5" ref="3">
    <original>E</original>
    <variation>K</variation>
    <location>
        <position position="412"/>
    </location>
</feature>
<reference key="1">
    <citation type="journal article" date="2000" name="Nature">
        <title>Sequence and analysis of chromosome 1 of the plant Arabidopsis thaliana.</title>
        <authorList>
            <person name="Theologis A."/>
            <person name="Ecker J.R."/>
            <person name="Palm C.J."/>
            <person name="Federspiel N.A."/>
            <person name="Kaul S."/>
            <person name="White O."/>
            <person name="Alonso J."/>
            <person name="Altafi H."/>
            <person name="Araujo R."/>
            <person name="Bowman C.L."/>
            <person name="Brooks S.Y."/>
            <person name="Buehler E."/>
            <person name="Chan A."/>
            <person name="Chao Q."/>
            <person name="Chen H."/>
            <person name="Cheuk R.F."/>
            <person name="Chin C.W."/>
            <person name="Chung M.K."/>
            <person name="Conn L."/>
            <person name="Conway A.B."/>
            <person name="Conway A.R."/>
            <person name="Creasy T.H."/>
            <person name="Dewar K."/>
            <person name="Dunn P."/>
            <person name="Etgu P."/>
            <person name="Feldblyum T.V."/>
            <person name="Feng J.-D."/>
            <person name="Fong B."/>
            <person name="Fujii C.Y."/>
            <person name="Gill J.E."/>
            <person name="Goldsmith A.D."/>
            <person name="Haas B."/>
            <person name="Hansen N.F."/>
            <person name="Hughes B."/>
            <person name="Huizar L."/>
            <person name="Hunter J.L."/>
            <person name="Jenkins J."/>
            <person name="Johnson-Hopson C."/>
            <person name="Khan S."/>
            <person name="Khaykin E."/>
            <person name="Kim C.J."/>
            <person name="Koo H.L."/>
            <person name="Kremenetskaia I."/>
            <person name="Kurtz D.B."/>
            <person name="Kwan A."/>
            <person name="Lam B."/>
            <person name="Langin-Hooper S."/>
            <person name="Lee A."/>
            <person name="Lee J.M."/>
            <person name="Lenz C.A."/>
            <person name="Li J.H."/>
            <person name="Li Y.-P."/>
            <person name="Lin X."/>
            <person name="Liu S.X."/>
            <person name="Liu Z.A."/>
            <person name="Luros J.S."/>
            <person name="Maiti R."/>
            <person name="Marziali A."/>
            <person name="Militscher J."/>
            <person name="Miranda M."/>
            <person name="Nguyen M."/>
            <person name="Nierman W.C."/>
            <person name="Osborne B.I."/>
            <person name="Pai G."/>
            <person name="Peterson J."/>
            <person name="Pham P.K."/>
            <person name="Rizzo M."/>
            <person name="Rooney T."/>
            <person name="Rowley D."/>
            <person name="Sakano H."/>
            <person name="Salzberg S.L."/>
            <person name="Schwartz J.R."/>
            <person name="Shinn P."/>
            <person name="Southwick A.M."/>
            <person name="Sun H."/>
            <person name="Tallon L.J."/>
            <person name="Tambunga G."/>
            <person name="Toriumi M.J."/>
            <person name="Town C.D."/>
            <person name="Utterback T."/>
            <person name="Van Aken S."/>
            <person name="Vaysberg M."/>
            <person name="Vysotskaia V.S."/>
            <person name="Walker M."/>
            <person name="Wu D."/>
            <person name="Yu G."/>
            <person name="Fraser C.M."/>
            <person name="Venter J.C."/>
            <person name="Davis R.W."/>
        </authorList>
    </citation>
    <scope>NUCLEOTIDE SEQUENCE [LARGE SCALE GENOMIC DNA]</scope>
    <source>
        <strain>cv. Columbia</strain>
    </source>
</reference>
<reference key="2">
    <citation type="journal article" date="2017" name="Plant J.">
        <title>Araport11: a complete reannotation of the Arabidopsis thaliana reference genome.</title>
        <authorList>
            <person name="Cheng C.Y."/>
            <person name="Krishnakumar V."/>
            <person name="Chan A.P."/>
            <person name="Thibaud-Nissen F."/>
            <person name="Schobel S."/>
            <person name="Town C.D."/>
        </authorList>
    </citation>
    <scope>GENOME REANNOTATION</scope>
    <source>
        <strain>cv. Columbia</strain>
    </source>
</reference>
<reference key="3">
    <citation type="journal article" date="2003" name="Science">
        <title>Empirical analysis of transcriptional activity in the Arabidopsis genome.</title>
        <authorList>
            <person name="Yamada K."/>
            <person name="Lim J."/>
            <person name="Dale J.M."/>
            <person name="Chen H."/>
            <person name="Shinn P."/>
            <person name="Palm C.J."/>
            <person name="Southwick A.M."/>
            <person name="Wu H.C."/>
            <person name="Kim C.J."/>
            <person name="Nguyen M."/>
            <person name="Pham P.K."/>
            <person name="Cheuk R.F."/>
            <person name="Karlin-Newmann G."/>
            <person name="Liu S.X."/>
            <person name="Lam B."/>
            <person name="Sakano H."/>
            <person name="Wu T."/>
            <person name="Yu G."/>
            <person name="Miranda M."/>
            <person name="Quach H.L."/>
            <person name="Tripp M."/>
            <person name="Chang C.H."/>
            <person name="Lee J.M."/>
            <person name="Toriumi M.J."/>
            <person name="Chan M.M."/>
            <person name="Tang C.C."/>
            <person name="Onodera C.S."/>
            <person name="Deng J.M."/>
            <person name="Akiyama K."/>
            <person name="Ansari Y."/>
            <person name="Arakawa T."/>
            <person name="Banh J."/>
            <person name="Banno F."/>
            <person name="Bowser L."/>
            <person name="Brooks S.Y."/>
            <person name="Carninci P."/>
            <person name="Chao Q."/>
            <person name="Choy N."/>
            <person name="Enju A."/>
            <person name="Goldsmith A.D."/>
            <person name="Gurjal M."/>
            <person name="Hansen N.F."/>
            <person name="Hayashizaki Y."/>
            <person name="Johnson-Hopson C."/>
            <person name="Hsuan V.W."/>
            <person name="Iida K."/>
            <person name="Karnes M."/>
            <person name="Khan S."/>
            <person name="Koesema E."/>
            <person name="Ishida J."/>
            <person name="Jiang P.X."/>
            <person name="Jones T."/>
            <person name="Kawai J."/>
            <person name="Kamiya A."/>
            <person name="Meyers C."/>
            <person name="Nakajima M."/>
            <person name="Narusaka M."/>
            <person name="Seki M."/>
            <person name="Sakurai T."/>
            <person name="Satou M."/>
            <person name="Tamse R."/>
            <person name="Vaysberg M."/>
            <person name="Wallender E.K."/>
            <person name="Wong C."/>
            <person name="Yamamura Y."/>
            <person name="Yuan S."/>
            <person name="Shinozaki K."/>
            <person name="Davis R.W."/>
            <person name="Theologis A."/>
            <person name="Ecker J.R."/>
        </authorList>
    </citation>
    <scope>NUCLEOTIDE SEQUENCE [LARGE SCALE MRNA]</scope>
    <source>
        <strain>cv. Columbia</strain>
    </source>
</reference>
<reference key="4">
    <citation type="journal article" date="2009" name="DNA Res.">
        <title>Analysis of multiple occurrences of alternative splicing events in Arabidopsis thaliana using novel sequenced full-length cDNAs.</title>
        <authorList>
            <person name="Iida K."/>
            <person name="Fukami-Kobayashi K."/>
            <person name="Toyoda A."/>
            <person name="Sakaki Y."/>
            <person name="Kobayashi M."/>
            <person name="Seki M."/>
            <person name="Shinozaki K."/>
        </authorList>
    </citation>
    <scope>NUCLEOTIDE SEQUENCE [LARGE SCALE MRNA] OF 94-552</scope>
    <source>
        <strain>cv. Columbia</strain>
        <tissue>Rosette leaf</tissue>
    </source>
</reference>
<reference key="5">
    <citation type="journal article" date="2009" name="Plant Cell">
        <title>Arabidopsis decapping 5 is required for mRNA decapping, P-body formation, and translational repression during postembryonic development.</title>
        <authorList>
            <person name="Xu J."/>
            <person name="Chua N.-H."/>
        </authorList>
    </citation>
    <scope>FUNCTION</scope>
    <scope>HOMODIMER</scope>
    <scope>INTERACTION WITH DCP1 AND DCP2</scope>
    <scope>SUBCELLULAR LOCATION</scope>
    <scope>DISRUPTION PHENOTYPE</scope>
    <scope>DEVELOPMENTAL STAGE</scope>
</reference>
<accession>Q9C658</accession>
<accession>B9DHI7</accession>
<accession>F4IE33</accession>
<accession>Q8RWC4</accession>
<accession>Q9ASU0</accession>
<accession>Q9C604</accession>
<gene>
    <name type="primary">DCP5</name>
    <name type="ordered locus">At1g26110</name>
    <name type="ORF">F14G11.8</name>
    <name type="ORF">F28B23.21</name>
</gene>
<dbReference type="EMBL" id="AC079829">
    <property type="protein sequence ID" value="AAG50671.1"/>
    <property type="molecule type" value="Genomic_DNA"/>
</dbReference>
<dbReference type="EMBL" id="AC084221">
    <property type="protein sequence ID" value="AAG50526.1"/>
    <property type="status" value="ALT_SEQ"/>
    <property type="molecule type" value="Genomic_DNA"/>
</dbReference>
<dbReference type="EMBL" id="CP002684">
    <property type="protein sequence ID" value="AEE30649.1"/>
    <property type="molecule type" value="Genomic_DNA"/>
</dbReference>
<dbReference type="EMBL" id="CP002684">
    <property type="protein sequence ID" value="AEE30650.1"/>
    <property type="molecule type" value="Genomic_DNA"/>
</dbReference>
<dbReference type="EMBL" id="AF361833">
    <property type="protein sequence ID" value="AAK32845.1"/>
    <property type="molecule type" value="mRNA"/>
</dbReference>
<dbReference type="EMBL" id="AY078047">
    <property type="protein sequence ID" value="AAL77748.1"/>
    <property type="molecule type" value="mRNA"/>
</dbReference>
<dbReference type="EMBL" id="AY093191">
    <property type="protein sequence ID" value="AAM13190.1"/>
    <property type="molecule type" value="mRNA"/>
</dbReference>
<dbReference type="EMBL" id="AK317540">
    <property type="protein sequence ID" value="BAH20204.1"/>
    <property type="molecule type" value="mRNA"/>
</dbReference>
<dbReference type="PIR" id="B86387">
    <property type="entry name" value="B86387"/>
</dbReference>
<dbReference type="RefSeq" id="NP_001154367.1">
    <molecule id="Q9C658-2"/>
    <property type="nucleotide sequence ID" value="NM_001160895.1"/>
</dbReference>
<dbReference type="RefSeq" id="NP_564239.1">
    <molecule id="Q9C658-1"/>
    <property type="nucleotide sequence ID" value="NM_102376.4"/>
</dbReference>
<dbReference type="SMR" id="Q9C658"/>
<dbReference type="BioGRID" id="24389">
    <property type="interactions" value="8"/>
</dbReference>
<dbReference type="FunCoup" id="Q9C658">
    <property type="interactions" value="4865"/>
</dbReference>
<dbReference type="IntAct" id="Q9C658">
    <property type="interactions" value="6"/>
</dbReference>
<dbReference type="MINT" id="Q9C658"/>
<dbReference type="STRING" id="3702.Q9C658"/>
<dbReference type="GlyGen" id="Q9C658">
    <property type="glycosylation" value="1 site"/>
</dbReference>
<dbReference type="iPTMnet" id="Q9C658"/>
<dbReference type="PaxDb" id="3702-AT1G26110.1"/>
<dbReference type="ProteomicsDB" id="224684">
    <molecule id="Q9C658-1"/>
</dbReference>
<dbReference type="EnsemblPlants" id="AT1G26110.1">
    <molecule id="Q9C658-1"/>
    <property type="protein sequence ID" value="AT1G26110.1"/>
    <property type="gene ID" value="AT1G26110"/>
</dbReference>
<dbReference type="EnsemblPlants" id="AT1G26110.2">
    <molecule id="Q9C658-2"/>
    <property type="protein sequence ID" value="AT1G26110.2"/>
    <property type="gene ID" value="AT1G26110"/>
</dbReference>
<dbReference type="GeneID" id="839152"/>
<dbReference type="Gramene" id="AT1G26110.1">
    <molecule id="Q9C658-1"/>
    <property type="protein sequence ID" value="AT1G26110.1"/>
    <property type="gene ID" value="AT1G26110"/>
</dbReference>
<dbReference type="Gramene" id="AT1G26110.2">
    <molecule id="Q9C658-2"/>
    <property type="protein sequence ID" value="AT1G26110.2"/>
    <property type="gene ID" value="AT1G26110"/>
</dbReference>
<dbReference type="KEGG" id="ath:AT1G26110"/>
<dbReference type="Araport" id="AT1G26110"/>
<dbReference type="TAIR" id="AT1G26110">
    <property type="gene designation" value="DCP5"/>
</dbReference>
<dbReference type="eggNOG" id="KOG1073">
    <property type="taxonomic scope" value="Eukaryota"/>
</dbReference>
<dbReference type="HOGENOM" id="CLU_028438_0_0_1"/>
<dbReference type="InParanoid" id="Q9C658"/>
<dbReference type="OMA" id="GNLNSWG"/>
<dbReference type="PhylomeDB" id="Q9C658"/>
<dbReference type="CD-CODE" id="4299E36E">
    <property type="entry name" value="Nucleolus"/>
</dbReference>
<dbReference type="CD-CODE" id="60F64496">
    <property type="entry name" value="P-body"/>
</dbReference>
<dbReference type="PRO" id="PR:Q9C658"/>
<dbReference type="Proteomes" id="UP000006548">
    <property type="component" value="Chromosome 1"/>
</dbReference>
<dbReference type="ExpressionAtlas" id="Q9C658">
    <property type="expression patterns" value="baseline and differential"/>
</dbReference>
<dbReference type="GO" id="GO:0005634">
    <property type="term" value="C:nucleus"/>
    <property type="evidence" value="ECO:0007005"/>
    <property type="project" value="TAIR"/>
</dbReference>
<dbReference type="GO" id="GO:0000932">
    <property type="term" value="C:P-body"/>
    <property type="evidence" value="ECO:0000314"/>
    <property type="project" value="UniProtKB"/>
</dbReference>
<dbReference type="GO" id="GO:0003729">
    <property type="term" value="F:mRNA binding"/>
    <property type="evidence" value="ECO:0000314"/>
    <property type="project" value="TAIR"/>
</dbReference>
<dbReference type="GO" id="GO:0042803">
    <property type="term" value="F:protein homodimerization activity"/>
    <property type="evidence" value="ECO:0000314"/>
    <property type="project" value="UniProtKB"/>
</dbReference>
<dbReference type="GO" id="GO:0031087">
    <property type="term" value="P:deadenylation-independent decapping of nuclear-transcribed mRNA"/>
    <property type="evidence" value="ECO:0000315"/>
    <property type="project" value="TAIR"/>
</dbReference>
<dbReference type="GO" id="GO:0006397">
    <property type="term" value="P:mRNA processing"/>
    <property type="evidence" value="ECO:0007669"/>
    <property type="project" value="UniProtKB-KW"/>
</dbReference>
<dbReference type="GO" id="GO:0017148">
    <property type="term" value="P:negative regulation of translation"/>
    <property type="evidence" value="ECO:0000315"/>
    <property type="project" value="TAIR"/>
</dbReference>
<dbReference type="GO" id="GO:0033962">
    <property type="term" value="P:P-body assembly"/>
    <property type="evidence" value="ECO:0000315"/>
    <property type="project" value="TAIR"/>
</dbReference>
<dbReference type="GO" id="GO:0010606">
    <property type="term" value="P:positive regulation of cytoplasmic mRNA processing body assembly"/>
    <property type="evidence" value="ECO:0000315"/>
    <property type="project" value="UniProtKB"/>
</dbReference>
<dbReference type="CDD" id="cd01736">
    <property type="entry name" value="LSm14_N"/>
    <property type="match status" value="1"/>
</dbReference>
<dbReference type="FunFam" id="2.30.30.100:FF:000033">
    <property type="entry name" value="Trailer hitch, isoform C"/>
    <property type="match status" value="1"/>
</dbReference>
<dbReference type="Gene3D" id="2.30.30.100">
    <property type="match status" value="1"/>
</dbReference>
<dbReference type="InterPro" id="IPR025762">
    <property type="entry name" value="DFDF"/>
</dbReference>
<dbReference type="InterPro" id="IPR019050">
    <property type="entry name" value="FDF_dom"/>
</dbReference>
<dbReference type="InterPro" id="IPR025761">
    <property type="entry name" value="FFD_box"/>
</dbReference>
<dbReference type="InterPro" id="IPR025609">
    <property type="entry name" value="Lsm14-like_N"/>
</dbReference>
<dbReference type="InterPro" id="IPR010920">
    <property type="entry name" value="LSM_dom_sf"/>
</dbReference>
<dbReference type="InterPro" id="IPR047575">
    <property type="entry name" value="Sm"/>
</dbReference>
<dbReference type="InterPro" id="IPR025768">
    <property type="entry name" value="TFG_box"/>
</dbReference>
<dbReference type="PANTHER" id="PTHR13586">
    <property type="entry name" value="SCD6 PROTEIN-RELATED"/>
    <property type="match status" value="1"/>
</dbReference>
<dbReference type="PANTHER" id="PTHR13586:SF0">
    <property type="entry name" value="TRAILER HITCH, ISOFORM H"/>
    <property type="match status" value="1"/>
</dbReference>
<dbReference type="Pfam" id="PF09532">
    <property type="entry name" value="FDF"/>
    <property type="match status" value="1"/>
</dbReference>
<dbReference type="Pfam" id="PF12701">
    <property type="entry name" value="LSM14"/>
    <property type="match status" value="1"/>
</dbReference>
<dbReference type="SMART" id="SM01199">
    <property type="entry name" value="FDF"/>
    <property type="match status" value="1"/>
</dbReference>
<dbReference type="SMART" id="SM01271">
    <property type="entry name" value="LSM14"/>
    <property type="match status" value="1"/>
</dbReference>
<dbReference type="SUPFAM" id="SSF50182">
    <property type="entry name" value="Sm-like ribonucleoproteins"/>
    <property type="match status" value="1"/>
</dbReference>
<dbReference type="PROSITE" id="PS51512">
    <property type="entry name" value="DFDF"/>
    <property type="match status" value="1"/>
</dbReference>
<dbReference type="PROSITE" id="PS51513">
    <property type="entry name" value="FFD"/>
    <property type="match status" value="1"/>
</dbReference>
<dbReference type="PROSITE" id="PS52002">
    <property type="entry name" value="SM"/>
    <property type="match status" value="1"/>
</dbReference>
<dbReference type="PROSITE" id="PS51536">
    <property type="entry name" value="TFG"/>
    <property type="match status" value="1"/>
</dbReference>
<evidence type="ECO:0000255" key="1">
    <source>
        <dbReference type="PROSITE-ProRule" id="PRU00845"/>
    </source>
</evidence>
<evidence type="ECO:0000255" key="2">
    <source>
        <dbReference type="PROSITE-ProRule" id="PRU01346"/>
    </source>
</evidence>
<evidence type="ECO:0000256" key="3">
    <source>
        <dbReference type="SAM" id="MobiDB-lite"/>
    </source>
</evidence>
<evidence type="ECO:0000269" key="4">
    <source>
    </source>
</evidence>
<evidence type="ECO:0000305" key="5"/>
<sequence>MAADNTGSKSSSAADSYVGSLISLTSKSEIRYEGILYNINTDESSIGLQNVRSFGTEGRKKDGPQVPPSDKVYEYILFRGTDIKDLQVKASPPVQPPASTINNDPAIIQSHYPSPMPTSGSLPSTASGSLPDISSHNGQPGQHGMGFQNAMPLYQPGGNLGSWGASPQPPMYWQGFYTPPPNGLPQLHQQSLIRPPHGLPMPNSLQQPLQYPNFNTPPPPTGSSSLQGSSLPEAPSSLFPFSTSSQMLAPSSLPFPGLPPVTLSSSLQSTLQSAPSPSLASEMAPPLLSNKAPITAPPTLPQDTNLLSFSLSTTRATEASTGLPLSNKPSVVTGPISPPQTTPLTSAPVAGVSSSISQDKPKPLLVTPGQLLQSGSSAVSLSPPSTNADKDVEVVQVSSSAGLEQSVPVTSEAQPPILPLPSSARPTQKPNGHSFPNHNGYRGRGRGRGRGAGRSHQVMKFTEDFDFTAMNEKFNKDEVWGHLGKSTTLDGDEDDDSPTVDEAELPKIEAKPVYNKDDFFDSLSSNTIDRESQNSRPRFSEQRKLDTETFGEFSRFRGGRGGRGGYGRNNGYSRGGYGGRGYGGYGGRGGGGGGYGYGGRGQGRGVSNRTT</sequence>
<organism>
    <name type="scientific">Arabidopsis thaliana</name>
    <name type="common">Mouse-ear cress</name>
    <dbReference type="NCBI Taxonomy" id="3702"/>
    <lineage>
        <taxon>Eukaryota</taxon>
        <taxon>Viridiplantae</taxon>
        <taxon>Streptophyta</taxon>
        <taxon>Embryophyta</taxon>
        <taxon>Tracheophyta</taxon>
        <taxon>Spermatophyta</taxon>
        <taxon>Magnoliopsida</taxon>
        <taxon>eudicotyledons</taxon>
        <taxon>Gunneridae</taxon>
        <taxon>Pentapetalae</taxon>
        <taxon>rosids</taxon>
        <taxon>malvids</taxon>
        <taxon>Brassicales</taxon>
        <taxon>Brassicaceae</taxon>
        <taxon>Camelineae</taxon>
        <taxon>Arabidopsis</taxon>
    </lineage>
</organism>
<name>DCP5_ARATH</name>
<protein>
    <recommendedName>
        <fullName>Protein decapping 5</fullName>
    </recommendedName>
</protein>